<feature type="chain" id="PRO_0000285674" description="Phosphatidylinositol polyphosphate 5-phosphatase type IV" evidence="2">
    <location>
        <begin position="1"/>
        <end position="641"/>
    </location>
</feature>
<feature type="propeptide" id="PRO_0000431690" description="Removed in mature form" evidence="2">
    <location>
        <begin position="642"/>
        <end position="644"/>
    </location>
</feature>
<feature type="repeat" description="1">
    <location>
        <begin position="10"/>
        <end position="13"/>
    </location>
</feature>
<feature type="repeat" description="2">
    <location>
        <begin position="15"/>
        <end position="18"/>
    </location>
</feature>
<feature type="repeat" description="3">
    <location>
        <begin position="28"/>
        <end position="31"/>
    </location>
</feature>
<feature type="repeat" description="4">
    <location>
        <begin position="39"/>
        <end position="42"/>
    </location>
</feature>
<feature type="repeat" description="5">
    <location>
        <begin position="55"/>
        <end position="58"/>
    </location>
</feature>
<feature type="repeat" description="6">
    <location>
        <begin position="69"/>
        <end position="71"/>
    </location>
</feature>
<feature type="repeat" description="7">
    <location>
        <begin position="72"/>
        <end position="74"/>
    </location>
</feature>
<feature type="repeat" description="8">
    <location>
        <begin position="75"/>
        <end position="78"/>
    </location>
</feature>
<feature type="repeat" description="9">
    <location>
        <begin position="121"/>
        <end position="124"/>
    </location>
</feature>
<feature type="repeat" description="10">
    <location>
        <begin position="169"/>
        <end position="172"/>
    </location>
</feature>
<feature type="repeat" description="11">
    <location>
        <begin position="183"/>
        <end position="185"/>
    </location>
</feature>
<feature type="repeat" description="12">
    <location>
        <begin position="190"/>
        <end position="193"/>
    </location>
</feature>
<feature type="repeat" description="13">
    <location>
        <begin position="236"/>
        <end position="239"/>
    </location>
</feature>
<feature type="region of interest" description="Disordered" evidence="4">
    <location>
        <begin position="1"/>
        <end position="193"/>
    </location>
</feature>
<feature type="region of interest" description="13 X 4 AA repeats of P-X-X-P">
    <location>
        <begin position="10"/>
        <end position="242"/>
    </location>
</feature>
<feature type="compositionally biased region" description="Basic and acidic residues" evidence="4">
    <location>
        <begin position="78"/>
        <end position="90"/>
    </location>
</feature>
<feature type="compositionally biased region" description="Polar residues" evidence="4">
    <location>
        <begin position="107"/>
        <end position="118"/>
    </location>
</feature>
<feature type="compositionally biased region" description="Low complexity" evidence="4">
    <location>
        <begin position="152"/>
        <end position="163"/>
    </location>
</feature>
<feature type="modified residue" description="Phosphoserine" evidence="2">
    <location>
        <position position="99"/>
    </location>
</feature>
<feature type="modified residue" description="Phosphoserine" evidence="3">
    <location>
        <position position="241"/>
    </location>
</feature>
<feature type="modified residue" description="Phosphoserine" evidence="1">
    <location>
        <position position="256"/>
    </location>
</feature>
<feature type="modified residue" description="Cysteine methyl ester" evidence="2">
    <location>
        <position position="641"/>
    </location>
</feature>
<feature type="lipid moiety-binding region" description="S-farnesyl cysteine" evidence="2">
    <location>
        <position position="641"/>
    </location>
</feature>
<dbReference type="EC" id="3.1.3.36" evidence="2"/>
<dbReference type="EC" id="3.1.3.86" evidence="2"/>
<dbReference type="EMBL" id="DQ997811">
    <property type="protein sequence ID" value="ABJ97675.1"/>
    <property type="molecule type" value="mRNA"/>
</dbReference>
<dbReference type="RefSeq" id="NP_001070981.1">
    <property type="nucleotide sequence ID" value="NM_001077513.1"/>
</dbReference>
<dbReference type="SMR" id="A0FI79"/>
<dbReference type="FunCoup" id="A0FI79">
    <property type="interactions" value="1693"/>
</dbReference>
<dbReference type="STRING" id="9598.ENSPTRP00000091349"/>
<dbReference type="GeneID" id="748603"/>
<dbReference type="KEGG" id="ptr:748603"/>
<dbReference type="CTD" id="56623"/>
<dbReference type="InParanoid" id="A0FI79"/>
<dbReference type="OrthoDB" id="10304at9604"/>
<dbReference type="Proteomes" id="UP000002277">
    <property type="component" value="Unplaced"/>
</dbReference>
<dbReference type="GO" id="GO:0005930">
    <property type="term" value="C:axoneme"/>
    <property type="evidence" value="ECO:0000250"/>
    <property type="project" value="UniProtKB"/>
</dbReference>
<dbReference type="GO" id="GO:0005794">
    <property type="term" value="C:Golgi apparatus"/>
    <property type="evidence" value="ECO:0000318"/>
    <property type="project" value="GO_Central"/>
</dbReference>
<dbReference type="GO" id="GO:0032580">
    <property type="term" value="C:Golgi cisterna membrane"/>
    <property type="evidence" value="ECO:0007669"/>
    <property type="project" value="UniProtKB-SubCell"/>
</dbReference>
<dbReference type="GO" id="GO:0005634">
    <property type="term" value="C:nucleus"/>
    <property type="evidence" value="ECO:0000250"/>
    <property type="project" value="UniProtKB"/>
</dbReference>
<dbReference type="GO" id="GO:0005886">
    <property type="term" value="C:plasma membrane"/>
    <property type="evidence" value="ECO:0007669"/>
    <property type="project" value="UniProtKB-SubCell"/>
</dbReference>
<dbReference type="GO" id="GO:0001726">
    <property type="term" value="C:ruffle"/>
    <property type="evidence" value="ECO:0007669"/>
    <property type="project" value="UniProtKB-SubCell"/>
</dbReference>
<dbReference type="GO" id="GO:0004445">
    <property type="term" value="F:inositol-polyphosphate 5-phosphatase activity"/>
    <property type="evidence" value="ECO:0007669"/>
    <property type="project" value="InterPro"/>
</dbReference>
<dbReference type="GO" id="GO:0034485">
    <property type="term" value="F:phosphatidylinositol-3,4,5-trisphosphate 5-phosphatase activity"/>
    <property type="evidence" value="ECO:0007669"/>
    <property type="project" value="UniProtKB-EC"/>
</dbReference>
<dbReference type="GO" id="GO:0043813">
    <property type="term" value="F:phosphatidylinositol-3,5-bisphosphate 5-phosphatase activity"/>
    <property type="evidence" value="ECO:0007669"/>
    <property type="project" value="RHEA"/>
</dbReference>
<dbReference type="GO" id="GO:0004439">
    <property type="term" value="F:phosphatidylinositol-4,5-bisphosphate 5-phosphatase activity"/>
    <property type="evidence" value="ECO:0000318"/>
    <property type="project" value="GO_Central"/>
</dbReference>
<dbReference type="GO" id="GO:0046856">
    <property type="term" value="P:phosphatidylinositol dephosphorylation"/>
    <property type="evidence" value="ECO:0000318"/>
    <property type="project" value="GO_Central"/>
</dbReference>
<dbReference type="CDD" id="cd09095">
    <property type="entry name" value="INPP5c_INPP5E-like"/>
    <property type="match status" value="1"/>
</dbReference>
<dbReference type="FunFam" id="3.60.10.10:FF:000039">
    <property type="entry name" value="72 kDa inositol polyphosphate 5-phosphatase"/>
    <property type="match status" value="1"/>
</dbReference>
<dbReference type="Gene3D" id="3.60.10.10">
    <property type="entry name" value="Endonuclease/exonuclease/phosphatase"/>
    <property type="match status" value="1"/>
</dbReference>
<dbReference type="InterPro" id="IPR036691">
    <property type="entry name" value="Endo/exonu/phosph_ase_sf"/>
</dbReference>
<dbReference type="InterPro" id="IPR042478">
    <property type="entry name" value="INPP5E"/>
</dbReference>
<dbReference type="InterPro" id="IPR000300">
    <property type="entry name" value="IPPc"/>
</dbReference>
<dbReference type="PANTHER" id="PTHR46625">
    <property type="entry name" value="72 KDA INOSITOL POLYPHOSPHATE 5-PHOSPHATASE"/>
    <property type="match status" value="1"/>
</dbReference>
<dbReference type="PANTHER" id="PTHR46625:SF1">
    <property type="entry name" value="PHOSPHATIDYLINOSITOL POLYPHOSPHATE 5-PHOSPHATASE TYPE IV"/>
    <property type="match status" value="1"/>
</dbReference>
<dbReference type="Pfam" id="PF22669">
    <property type="entry name" value="Exo_endo_phos2"/>
    <property type="match status" value="1"/>
</dbReference>
<dbReference type="SMART" id="SM00128">
    <property type="entry name" value="IPPc"/>
    <property type="match status" value="1"/>
</dbReference>
<dbReference type="SUPFAM" id="SSF56219">
    <property type="entry name" value="DNase I-like"/>
    <property type="match status" value="1"/>
</dbReference>
<comment type="function">
    <text evidence="1 2">Phosphatidylinositol (PtdIns) phosphatase that specifically hydrolyzes the 5-phosphate of phosphatidylinositol-3,4,5-trisphosphate (PtdIns(3,4,5)P3), phosphatidylinositol 4,5-bisphosphate(PtdIns(4,5)P2) and phosphatidylinositol 3,5-bisphosphate (PtdIns(3,5)P2). Specific for lipid substrates, inactive towards water soluble inositol phosphates (By similarity). Plays an essential role in the primary cilium by controlling ciliary growth and phosphoinositide 3-kinase (PI3K) signaling and stability (By similarity).</text>
</comment>
<comment type="catalytic activity">
    <reaction evidence="2">
        <text>a 1,2-diacyl-sn-glycero-3-phospho-(1D-myo-inositol-4,5-bisphosphate) + H2O = a 1,2-diacyl-sn-glycero-3-phospho-(1D-myo-inositol 4-phosphate) + phosphate</text>
        <dbReference type="Rhea" id="RHEA:22764"/>
        <dbReference type="ChEBI" id="CHEBI:15377"/>
        <dbReference type="ChEBI" id="CHEBI:43474"/>
        <dbReference type="ChEBI" id="CHEBI:58178"/>
        <dbReference type="ChEBI" id="CHEBI:58456"/>
        <dbReference type="EC" id="3.1.3.36"/>
    </reaction>
    <physiologicalReaction direction="left-to-right" evidence="2">
        <dbReference type="Rhea" id="RHEA:22765"/>
    </physiologicalReaction>
</comment>
<comment type="catalytic activity">
    <reaction evidence="2">
        <text>a 1,2-diacyl-sn-glycero-3-phospho-(1D-myo-inositol-3,4,5-trisphosphate) + H2O = a 1,2-diacyl-sn-glycero-3-phospho-(1D-myo-inositol-3,4-bisphosphate) + phosphate</text>
        <dbReference type="Rhea" id="RHEA:25528"/>
        <dbReference type="ChEBI" id="CHEBI:15377"/>
        <dbReference type="ChEBI" id="CHEBI:43474"/>
        <dbReference type="ChEBI" id="CHEBI:57658"/>
        <dbReference type="ChEBI" id="CHEBI:57836"/>
        <dbReference type="EC" id="3.1.3.86"/>
    </reaction>
    <physiologicalReaction direction="left-to-right" evidence="2">
        <dbReference type="Rhea" id="RHEA:25529"/>
    </physiologicalReaction>
</comment>
<comment type="catalytic activity">
    <reaction evidence="1">
        <text>a 1,2-diacyl-sn-glycero-3-phospho-(1D-myo-inositol-3,5-bisphosphate) + H2O = a 1,2-diacyl-sn-glycero-3-phospho-(1D-myo-inositol-3-phosphate) + phosphate</text>
        <dbReference type="Rhea" id="RHEA:32955"/>
        <dbReference type="ChEBI" id="CHEBI:15377"/>
        <dbReference type="ChEBI" id="CHEBI:43474"/>
        <dbReference type="ChEBI" id="CHEBI:57923"/>
        <dbReference type="ChEBI" id="CHEBI:58088"/>
    </reaction>
    <physiologicalReaction direction="left-to-right" evidence="1">
        <dbReference type="Rhea" id="RHEA:32956"/>
    </physiologicalReaction>
</comment>
<comment type="subunit">
    <text evidence="2">Interacts (when prenylated) with PDE6D; this is important for normal location in cilia.</text>
</comment>
<comment type="subcellular location">
    <subcellularLocation>
        <location evidence="1">Cytoplasm</location>
        <location evidence="1">Cytoskeleton</location>
        <location evidence="1">Cilium axoneme</location>
    </subcellularLocation>
    <subcellularLocation>
        <location evidence="1">Golgi apparatus</location>
        <location evidence="1">Golgi stack membrane</location>
        <topology evidence="1">Peripheral membrane protein</topology>
        <orientation evidence="1">Cytoplasmic side</orientation>
    </subcellularLocation>
    <subcellularLocation>
        <location evidence="3">Cell membrane</location>
        <topology evidence="3">Peripheral membrane protein</topology>
        <orientation evidence="3">Cytoplasmic side</orientation>
    </subcellularLocation>
    <subcellularLocation>
        <location evidence="3">Cell projection</location>
        <location evidence="3">Ruffle</location>
    </subcellularLocation>
    <subcellularLocation>
        <location evidence="3">Cytoplasm</location>
    </subcellularLocation>
    <subcellularLocation>
        <location evidence="1">Nucleus</location>
    </subcellularLocation>
    <text evidence="1">Peripheral membrane protein associated with Golgi stacks.</text>
</comment>
<comment type="similarity">
    <text evidence="5">Belongs to the inositol polyphosphate 5-phosphatase family.</text>
</comment>
<gene>
    <name type="primary">INPP5E</name>
</gene>
<organism>
    <name type="scientific">Pan troglodytes</name>
    <name type="common">Chimpanzee</name>
    <dbReference type="NCBI Taxonomy" id="9598"/>
    <lineage>
        <taxon>Eukaryota</taxon>
        <taxon>Metazoa</taxon>
        <taxon>Chordata</taxon>
        <taxon>Craniata</taxon>
        <taxon>Vertebrata</taxon>
        <taxon>Euteleostomi</taxon>
        <taxon>Mammalia</taxon>
        <taxon>Eutheria</taxon>
        <taxon>Euarchontoglires</taxon>
        <taxon>Primates</taxon>
        <taxon>Haplorrhini</taxon>
        <taxon>Catarrhini</taxon>
        <taxon>Hominidae</taxon>
        <taxon>Pan</taxon>
    </lineage>
</organism>
<accession>A0FI79</accession>
<name>INP5E_PANTR</name>
<sequence>MPSKAENLRPSEPAPQPPEGRTLQGQLPGAPLAQRAGSPPDVPGSESPALACSTPATPSGEDPPARAAPIAPRPPARPRLERALSLDDKGWRRRRFRGSQEDLEARNGTSPSRGSVQSEGPGAPAHSCSPPCLSTSLQEIPKSRGVLSSERGSPSSGGNPLSGVASSSPNLPHRDAAVAGSSPRLPSLLPPRPPPALSLDIASDSLRTANKVDSDLADYKLRAQPLLVRAHSSLGPGRPRSPLACDDCSLRSAKSSFSLLAPIRSKDVRSRSYLEGSLLASGALLGADELARYFPDRNVALFVATWNMQGQKELPPSLDEFLLPAEADYAQDLYVIGVQEGCSDRREWETRLQETLGPHYVLLSSAAHGVLYMSLFIRRDLIWFCSEVECSTVTTRIVSQIKTKGALGISFTFFGTSFLFITSHFTSGDGKVAERLLDYTRTVQALALPRNVPDTNPYRSSAADVTTRFDEVFWFGDFNFRLSGGRTVVDALLCQGLVVDVPALLQHDQLIREMRKGSIFKGFQEPDIHFLPSYKFDIGKDTYDSTSKQRTPSYTDRVLYRSRHKGDICPVSYSSCPGIKTSDHRPVYGLFRVKVRPGRDNIPLAAGKFDRELYLLGIKRRISKEIQRQQALQSQNSSTICSVS</sequence>
<reference key="1">
    <citation type="submission" date="2006-09" db="EMBL/GenBank/DDBJ databases">
        <title>The complete CDS of the chimpanzee INPP5E homolog.</title>
        <authorList>
            <person name="Hampshire D.J."/>
            <person name="Woods C.G."/>
            <person name="Riley J.H."/>
            <person name="Inglehearn C.F."/>
        </authorList>
    </citation>
    <scope>NUCLEOTIDE SEQUENCE [MRNA]</scope>
</reference>
<keyword id="KW-1003">Cell membrane</keyword>
<keyword id="KW-0966">Cell projection</keyword>
<keyword id="KW-0969">Cilium</keyword>
<keyword id="KW-0963">Cytoplasm</keyword>
<keyword id="KW-0206">Cytoskeleton</keyword>
<keyword id="KW-0333">Golgi apparatus</keyword>
<keyword id="KW-0378">Hydrolase</keyword>
<keyword id="KW-0443">Lipid metabolism</keyword>
<keyword id="KW-0449">Lipoprotein</keyword>
<keyword id="KW-0472">Membrane</keyword>
<keyword id="KW-0488">Methylation</keyword>
<keyword id="KW-0539">Nucleus</keyword>
<keyword id="KW-0597">Phosphoprotein</keyword>
<keyword id="KW-0636">Prenylation</keyword>
<keyword id="KW-1185">Reference proteome</keyword>
<keyword id="KW-0677">Repeat</keyword>
<proteinExistence type="evidence at transcript level"/>
<protein>
    <recommendedName>
        <fullName evidence="5">Phosphatidylinositol polyphosphate 5-phosphatase type IV</fullName>
    </recommendedName>
    <alternativeName>
        <fullName>72 kDa inositol polyphosphate 5-phosphatase</fullName>
    </alternativeName>
    <alternativeName>
        <fullName>Inositol polyphosphate-5-phosphatase E</fullName>
    </alternativeName>
    <alternativeName>
        <fullName>Phosphatidylinositol 4,5-bisphosphate 5-phosphatase</fullName>
        <ecNumber evidence="2">3.1.3.36</ecNumber>
    </alternativeName>
    <alternativeName>
        <fullName>Phosphatidylinositol-3,4,5-trisphosphate 5-phosphatase</fullName>
        <ecNumber evidence="2">3.1.3.86</ecNumber>
    </alternativeName>
</protein>
<evidence type="ECO:0000250" key="1">
    <source>
        <dbReference type="UniProtKB" id="Q9JII1"/>
    </source>
</evidence>
<evidence type="ECO:0000250" key="2">
    <source>
        <dbReference type="UniProtKB" id="Q9NRR6"/>
    </source>
</evidence>
<evidence type="ECO:0000250" key="3">
    <source>
        <dbReference type="UniProtKB" id="Q9WVR1"/>
    </source>
</evidence>
<evidence type="ECO:0000256" key="4">
    <source>
        <dbReference type="SAM" id="MobiDB-lite"/>
    </source>
</evidence>
<evidence type="ECO:0000305" key="5"/>